<feature type="initiator methionine" description="Removed" evidence="3">
    <location>
        <position position="1"/>
    </location>
</feature>
<feature type="chain" id="PRO_0000089796" description="Transmembrane protein 254">
    <location>
        <begin position="2"/>
        <end position="123"/>
    </location>
</feature>
<feature type="transmembrane region" description="Helical" evidence="1">
    <location>
        <begin position="15"/>
        <end position="35"/>
    </location>
</feature>
<feature type="transmembrane region" description="Helical" evidence="1">
    <location>
        <begin position="61"/>
        <end position="81"/>
    </location>
</feature>
<feature type="transmembrane region" description="Helical" evidence="1">
    <location>
        <begin position="95"/>
        <end position="115"/>
    </location>
</feature>
<feature type="modified residue" description="N-acetylalanine" evidence="3">
    <location>
        <position position="2"/>
    </location>
</feature>
<feature type="splice variant" id="VSP_047062" description="In isoform 2." evidence="2">
    <location>
        <begin position="85"/>
        <end position="123"/>
    </location>
</feature>
<feature type="splice variant" id="VSP_047063" description="In isoform 3." evidence="2">
    <original>HKGITSGRAQLLWFLQTFFFGIASLTILIAYKRKRQKQT</original>
    <variation>QNELRIRIKMRKLILRDSE</variation>
    <location>
        <begin position="85"/>
        <end position="123"/>
    </location>
</feature>
<feature type="sequence conflict" description="In Ref. 3; BAD96256." evidence="2" ref="3">
    <original>H</original>
    <variation>R</variation>
    <location>
        <position position="56"/>
    </location>
</feature>
<feature type="sequence conflict" description="In Ref. 2; CAG33591." evidence="2" ref="2">
    <original>S</original>
    <variation>F</variation>
    <location>
        <position position="76"/>
    </location>
</feature>
<feature type="sequence conflict" description="In Ref. 1; BAB14528." evidence="2" ref="1">
    <original>V</original>
    <variation>A</variation>
    <location>
        <position position="81"/>
    </location>
</feature>
<accession>Q8TBM7</accession>
<accession>D3DWC8</accession>
<accession>Q53HP4</accession>
<accession>Q5JTC0</accession>
<accession>Q5JTC1</accession>
<accession>Q6IA45</accession>
<accession>Q9H8S6</accession>
<dbReference type="EMBL" id="AK023325">
    <property type="protein sequence ID" value="BAB14528.1"/>
    <property type="molecule type" value="mRNA"/>
</dbReference>
<dbReference type="EMBL" id="CR457310">
    <property type="protein sequence ID" value="CAG33591.1"/>
    <property type="molecule type" value="mRNA"/>
</dbReference>
<dbReference type="EMBL" id="AK222536">
    <property type="protein sequence ID" value="BAD96256.1"/>
    <property type="molecule type" value="mRNA"/>
</dbReference>
<dbReference type="EMBL" id="AL356095">
    <property type="status" value="NOT_ANNOTATED_CDS"/>
    <property type="molecule type" value="Genomic_DNA"/>
</dbReference>
<dbReference type="EMBL" id="CH471142">
    <property type="protein sequence ID" value="EAW80412.1"/>
    <property type="molecule type" value="Genomic_DNA"/>
</dbReference>
<dbReference type="EMBL" id="CH471142">
    <property type="protein sequence ID" value="EAW80413.1"/>
    <property type="molecule type" value="Genomic_DNA"/>
</dbReference>
<dbReference type="EMBL" id="BC022252">
    <property type="protein sequence ID" value="AAH22252.1"/>
    <property type="molecule type" value="mRNA"/>
</dbReference>
<dbReference type="CCDS" id="CCDS58086.1">
    <molecule id="Q8TBM7-3"/>
</dbReference>
<dbReference type="CCDS" id="CCDS58087.1">
    <molecule id="Q8TBM7-2"/>
</dbReference>
<dbReference type="CCDS" id="CCDS7363.1">
    <molecule id="Q8TBM7-1"/>
</dbReference>
<dbReference type="RefSeq" id="NP_001257296.1">
    <property type="nucleotide sequence ID" value="NM_001270367.1"/>
</dbReference>
<dbReference type="RefSeq" id="NP_001257297.1">
    <property type="nucleotide sequence ID" value="NM_001270368.1"/>
</dbReference>
<dbReference type="RefSeq" id="NP_001257298.1">
    <property type="nucleotide sequence ID" value="NM_001270369.1"/>
</dbReference>
<dbReference type="RefSeq" id="NP_001257299.1">
    <molecule id="Q8TBM7-3"/>
    <property type="nucleotide sequence ID" value="NM_001270370.2"/>
</dbReference>
<dbReference type="RefSeq" id="NP_001257300.1">
    <property type="nucleotide sequence ID" value="NM_001270371.1"/>
</dbReference>
<dbReference type="RefSeq" id="NP_001257301.1">
    <molecule id="Q8TBM7-2"/>
    <property type="nucleotide sequence ID" value="NM_001270372.2"/>
</dbReference>
<dbReference type="RefSeq" id="NP_001257302.1">
    <molecule id="Q8TBM7-2"/>
    <property type="nucleotide sequence ID" value="NM_001270373.2"/>
</dbReference>
<dbReference type="RefSeq" id="NP_001257303.1">
    <property type="nucleotide sequence ID" value="NM_001270374.1"/>
</dbReference>
<dbReference type="RefSeq" id="NP_079401.2">
    <molecule id="Q8TBM7-1"/>
    <property type="nucleotide sequence ID" value="NM_025125.3"/>
</dbReference>
<dbReference type="RefSeq" id="XP_047281738.1">
    <molecule id="Q8TBM7-2"/>
    <property type="nucleotide sequence ID" value="XM_047425782.1"/>
</dbReference>
<dbReference type="BioGRID" id="123168">
    <property type="interactions" value="46"/>
</dbReference>
<dbReference type="FunCoup" id="Q8TBM7">
    <property type="interactions" value="78"/>
</dbReference>
<dbReference type="IntAct" id="Q8TBM7">
    <property type="interactions" value="40"/>
</dbReference>
<dbReference type="STRING" id="9606.ENSP00000361355"/>
<dbReference type="iPTMnet" id="Q8TBM7"/>
<dbReference type="PhosphoSitePlus" id="Q8TBM7"/>
<dbReference type="BioMuta" id="TMEM254"/>
<dbReference type="jPOST" id="Q8TBM7"/>
<dbReference type="MassIVE" id="Q8TBM7"/>
<dbReference type="PaxDb" id="9606-ENSP00000361355"/>
<dbReference type="PeptideAtlas" id="Q8TBM7"/>
<dbReference type="Pumba" id="Q8TBM7"/>
<dbReference type="Antibodypedia" id="29924">
    <property type="antibodies" value="79 antibodies from 18 providers"/>
</dbReference>
<dbReference type="DNASU" id="80195"/>
<dbReference type="Ensembl" id="ENST00000372274.5">
    <molecule id="Q8TBM7-3"/>
    <property type="protein sequence ID" value="ENSP00000361348.1"/>
    <property type="gene ID" value="ENSG00000133678.14"/>
</dbReference>
<dbReference type="Ensembl" id="ENST00000372275.5">
    <molecule id="Q8TBM7-2"/>
    <property type="protein sequence ID" value="ENSP00000361349.1"/>
    <property type="gene ID" value="ENSG00000133678.14"/>
</dbReference>
<dbReference type="Ensembl" id="ENST00000372277.7">
    <molecule id="Q8TBM7-3"/>
    <property type="protein sequence ID" value="ENSP00000361351.3"/>
    <property type="gene ID" value="ENSG00000133678.14"/>
</dbReference>
<dbReference type="Ensembl" id="ENST00000372281.8">
    <molecule id="Q8TBM7-1"/>
    <property type="protein sequence ID" value="ENSP00000361355.3"/>
    <property type="gene ID" value="ENSG00000133678.14"/>
</dbReference>
<dbReference type="GeneID" id="80195"/>
<dbReference type="KEGG" id="hsa:80195"/>
<dbReference type="MANE-Select" id="ENST00000372281.8">
    <property type="protein sequence ID" value="ENSP00000361355.3"/>
    <property type="RefSeq nucleotide sequence ID" value="NM_025125.4"/>
    <property type="RefSeq protein sequence ID" value="NP_079401.2"/>
</dbReference>
<dbReference type="UCSC" id="uc001kbl.5">
    <molecule id="Q8TBM7-1"/>
    <property type="organism name" value="human"/>
</dbReference>
<dbReference type="AGR" id="HGNC:25804"/>
<dbReference type="CTD" id="80195"/>
<dbReference type="DisGeNET" id="80195"/>
<dbReference type="GeneCards" id="TMEM254"/>
<dbReference type="HGNC" id="HGNC:25804">
    <property type="gene designation" value="TMEM254"/>
</dbReference>
<dbReference type="HPA" id="ENSG00000133678">
    <property type="expression patterns" value="Low tissue specificity"/>
</dbReference>
<dbReference type="neXtProt" id="NX_Q8TBM7"/>
<dbReference type="OpenTargets" id="ENSG00000133678"/>
<dbReference type="PharmGKB" id="PA134875855"/>
<dbReference type="VEuPathDB" id="HostDB:ENSG00000133678"/>
<dbReference type="eggNOG" id="ENOG502S4F5">
    <property type="taxonomic scope" value="Eukaryota"/>
</dbReference>
<dbReference type="GeneTree" id="ENSGT00390000016042"/>
<dbReference type="HOGENOM" id="CLU_150378_1_0_1"/>
<dbReference type="InParanoid" id="Q8TBM7"/>
<dbReference type="OMA" id="IMYKGWW"/>
<dbReference type="OrthoDB" id="9984821at2759"/>
<dbReference type="PAN-GO" id="Q8TBM7">
    <property type="GO annotations" value="0 GO annotations based on evolutionary models"/>
</dbReference>
<dbReference type="PhylomeDB" id="Q8TBM7"/>
<dbReference type="TreeFam" id="TF328617"/>
<dbReference type="PathwayCommons" id="Q8TBM7"/>
<dbReference type="SignaLink" id="Q8TBM7"/>
<dbReference type="BioGRID-ORCS" id="80195">
    <property type="hits" value="7 hits in 1148 CRISPR screens"/>
</dbReference>
<dbReference type="ChiTaRS" id="TMEM254">
    <property type="organism name" value="human"/>
</dbReference>
<dbReference type="GenomeRNAi" id="80195"/>
<dbReference type="Pharos" id="Q8TBM7">
    <property type="development level" value="Tdark"/>
</dbReference>
<dbReference type="PRO" id="PR:Q8TBM7"/>
<dbReference type="Proteomes" id="UP000005640">
    <property type="component" value="Chromosome 10"/>
</dbReference>
<dbReference type="RNAct" id="Q8TBM7">
    <property type="molecule type" value="protein"/>
</dbReference>
<dbReference type="Bgee" id="ENSG00000133678">
    <property type="expression patterns" value="Expressed in right uterine tube and 159 other cell types or tissues"/>
</dbReference>
<dbReference type="ExpressionAtlas" id="Q8TBM7">
    <property type="expression patterns" value="baseline and differential"/>
</dbReference>
<dbReference type="GO" id="GO:0016020">
    <property type="term" value="C:membrane"/>
    <property type="evidence" value="ECO:0007669"/>
    <property type="project" value="UniProtKB-SubCell"/>
</dbReference>
<dbReference type="InterPro" id="IPR028110">
    <property type="entry name" value="TMEM254"/>
</dbReference>
<dbReference type="PANTHER" id="PTHR34104">
    <property type="entry name" value="TRANSMEMBRANE PROTEIN 254"/>
    <property type="match status" value="1"/>
</dbReference>
<dbReference type="PANTHER" id="PTHR34104:SF3">
    <property type="entry name" value="TRANSMEMBRANE PROTEIN 254"/>
    <property type="match status" value="1"/>
</dbReference>
<dbReference type="Pfam" id="PF14934">
    <property type="entry name" value="TMEM254"/>
    <property type="match status" value="1"/>
</dbReference>
<proteinExistence type="evidence at protein level"/>
<comment type="interaction">
    <interactant intactId="EBI-11956809">
        <id>Q8TBM7</id>
    </interactant>
    <interactant intactId="EBI-13059134">
        <id>Q13520</id>
        <label>AQP6</label>
    </interactant>
    <organismsDiffer>false</organismsDiffer>
    <experiments>3</experiments>
</comment>
<comment type="interaction">
    <interactant intactId="EBI-11956809">
        <id>Q8TBM7</id>
    </interactant>
    <interactant intactId="EBI-11343438">
        <id>Q3SXY8</id>
        <label>ARL13B</label>
    </interactant>
    <organismsDiffer>false</organismsDiffer>
    <experiments>3</experiments>
</comment>
<comment type="interaction">
    <interactant intactId="EBI-11956809">
        <id>Q8TBM7</id>
    </interactant>
    <interactant intactId="EBI-12935759">
        <id>O15342</id>
        <label>ATP6V0E1</label>
    </interactant>
    <organismsDiffer>false</organismsDiffer>
    <experiments>3</experiments>
</comment>
<comment type="interaction">
    <interactant intactId="EBI-11956809">
        <id>Q8TBM7</id>
    </interactant>
    <interactant intactId="EBI-747430">
        <id>Q9BXK5</id>
        <label>BCL2L13</label>
    </interactant>
    <organismsDiffer>false</organismsDiffer>
    <experiments>3</experiments>
</comment>
<comment type="interaction">
    <interactant intactId="EBI-11956809">
        <id>Q8TBM7</id>
    </interactant>
    <interactant intactId="EBI-700794">
        <id>Q13323</id>
        <label>BIK</label>
    </interactant>
    <organismsDiffer>false</organismsDiffer>
    <experiments>3</experiments>
</comment>
<comment type="interaction">
    <interactant intactId="EBI-11956809">
        <id>Q8TBM7</id>
    </interactant>
    <interactant intactId="EBI-12222807">
        <id>P04233-2</id>
        <label>CD74</label>
    </interactant>
    <organismsDiffer>false</organismsDiffer>
    <experiments>3</experiments>
</comment>
<comment type="interaction">
    <interactant intactId="EBI-11956809">
        <id>Q8TBM7</id>
    </interactant>
    <interactant intactId="EBI-7797864">
        <id>P11912</id>
        <label>CD79A</label>
    </interactant>
    <organismsDiffer>false</organismsDiffer>
    <experiments>3</experiments>
</comment>
<comment type="interaction">
    <interactant intactId="EBI-11956809">
        <id>Q8TBM7</id>
    </interactant>
    <interactant intactId="EBI-2622997">
        <id>Q9HA82</id>
        <label>CERS4</label>
    </interactant>
    <organismsDiffer>false</organismsDiffer>
    <experiments>3</experiments>
</comment>
<comment type="interaction">
    <interactant intactId="EBI-11956809">
        <id>Q8TBM7</id>
    </interactant>
    <interactant intactId="EBI-18013275">
        <id>Q7Z7G2</id>
        <label>CPLX4</label>
    </interactant>
    <organismsDiffer>false</organismsDiffer>
    <experiments>3</experiments>
</comment>
<comment type="interaction">
    <interactant intactId="EBI-11956809">
        <id>Q8TBM7</id>
    </interactant>
    <interactant intactId="EBI-3915253">
        <id>Q15125</id>
        <label>EBP</label>
    </interactant>
    <organismsDiffer>false</organismsDiffer>
    <experiments>3</experiments>
</comment>
<comment type="interaction">
    <interactant intactId="EBI-11956809">
        <id>Q8TBM7</id>
    </interactant>
    <interactant intactId="EBI-18535450">
        <id>Q9GZR5</id>
        <label>ELOVL4</label>
    </interactant>
    <organismsDiffer>false</organismsDiffer>
    <experiments>3</experiments>
</comment>
<comment type="interaction">
    <interactant intactId="EBI-11956809">
        <id>Q8TBM7</id>
    </interactant>
    <interactant intactId="EBI-18304435">
        <id>Q5JX71</id>
        <label>FAM209A</label>
    </interactant>
    <organismsDiffer>false</organismsDiffer>
    <experiments>3</experiments>
</comment>
<comment type="interaction">
    <interactant intactId="EBI-11956809">
        <id>Q8TBM7</id>
    </interactant>
    <interactant intactId="EBI-724839">
        <id>Q14318</id>
        <label>FKBP8</label>
    </interactant>
    <organismsDiffer>false</organismsDiffer>
    <experiments>3</experiments>
</comment>
<comment type="interaction">
    <interactant intactId="EBI-11956809">
        <id>Q8TBM7</id>
    </interactant>
    <interactant intactId="EBI-12142257">
        <id>Q8TBE3</id>
        <label>FNDC9</label>
    </interactant>
    <organismsDiffer>false</organismsDiffer>
    <experiments>3</experiments>
</comment>
<comment type="interaction">
    <interactant intactId="EBI-11956809">
        <id>Q8TBM7</id>
    </interactant>
    <interactant intactId="EBI-13345167">
        <id>Q8TDT2</id>
        <label>GPR152</label>
    </interactant>
    <organismsDiffer>false</organismsDiffer>
    <experiments>3</experiments>
</comment>
<comment type="interaction">
    <interactant intactId="EBI-11956809">
        <id>Q8TBM7</id>
    </interactant>
    <interactant intactId="EBI-11721746">
        <id>Q8TED1</id>
        <label>GPX8</label>
    </interactant>
    <organismsDiffer>false</organismsDiffer>
    <experiments>3</experiments>
</comment>
<comment type="interaction">
    <interactant intactId="EBI-11956809">
        <id>Q8TBM7</id>
    </interactant>
    <interactant intactId="EBI-3905457">
        <id>P38484</id>
        <label>IFNGR2</label>
    </interactant>
    <organismsDiffer>false</organismsDiffer>
    <experiments>3</experiments>
</comment>
<comment type="interaction">
    <interactant intactId="EBI-11956809">
        <id>Q8TBM7</id>
    </interactant>
    <interactant intactId="EBI-1757512">
        <id>P26951</id>
        <label>IL3RA</label>
    </interactant>
    <organismsDiffer>false</organismsDiffer>
    <experiments>3</experiments>
</comment>
<comment type="interaction">
    <interactant intactId="EBI-11956809">
        <id>Q8TBM7</id>
    </interactant>
    <interactant intactId="EBI-17490413">
        <id>A8MZ59</id>
        <label>LEUTX</label>
    </interactant>
    <organismsDiffer>false</organismsDiffer>
    <experiments>3</experiments>
</comment>
<comment type="interaction">
    <interactant intactId="EBI-11956809">
        <id>Q8TBM7</id>
    </interactant>
    <interactant intactId="EBI-2820517">
        <id>Q8TAF8</id>
        <label>LHFPL5</label>
    </interactant>
    <organismsDiffer>false</organismsDiffer>
    <experiments>3</experiments>
</comment>
<comment type="interaction">
    <interactant intactId="EBI-11956809">
        <id>Q8TBM7</id>
    </interactant>
    <interactant intactId="EBI-11956541">
        <id>Q9GZY8-5</id>
        <label>MFF</label>
    </interactant>
    <organismsDiffer>false</organismsDiffer>
    <experiments>3</experiments>
</comment>
<comment type="interaction">
    <interactant intactId="EBI-11956809">
        <id>Q8TBM7</id>
    </interactant>
    <interactant intactId="EBI-6163737">
        <id>Q8N4V1</id>
        <label>MMGT1</label>
    </interactant>
    <organismsDiffer>false</organismsDiffer>
    <experiments>3</experiments>
</comment>
<comment type="interaction">
    <interactant intactId="EBI-11956809">
        <id>Q8TBM7</id>
    </interactant>
    <interactant intactId="EBI-3923617">
        <id>Q9H2K0</id>
        <label>MTIF3</label>
    </interactant>
    <organismsDiffer>false</organismsDiffer>
    <experiments>3</experiments>
</comment>
<comment type="interaction">
    <interactant intactId="EBI-11956809">
        <id>Q8TBM7</id>
    </interactant>
    <interactant intactId="EBI-2559100">
        <id>O75459</id>
        <label>PAGE1</label>
    </interactant>
    <organismsDiffer>false</organismsDiffer>
    <experiments>3</experiments>
</comment>
<comment type="interaction">
    <interactant intactId="EBI-11956809">
        <id>Q8TBM7</id>
    </interactant>
    <interactant intactId="EBI-12188331">
        <id>P60201-2</id>
        <label>PLP1</label>
    </interactant>
    <organismsDiffer>false</organismsDiffer>
    <experiments>3</experiments>
</comment>
<comment type="interaction">
    <interactant intactId="EBI-11956809">
        <id>Q8TBM7</id>
    </interactant>
    <interactant intactId="EBI-7545592">
        <id>Q9H6H4</id>
        <label>REEP4</label>
    </interactant>
    <organismsDiffer>false</organismsDiffer>
    <experiments>3</experiments>
</comment>
<comment type="interaction">
    <interactant intactId="EBI-11956809">
        <id>Q8TBM7</id>
    </interactant>
    <interactant intactId="EBI-10192441">
        <id>Q86VR2</id>
        <label>RETREG3</label>
    </interactant>
    <organismsDiffer>false</organismsDiffer>
    <experiments>3</experiments>
</comment>
<comment type="interaction">
    <interactant intactId="EBI-11956809">
        <id>Q8TBM7</id>
    </interactant>
    <interactant intactId="EBI-3920694">
        <id>Q9NR31</id>
        <label>SAR1A</label>
    </interactant>
    <organismsDiffer>false</organismsDiffer>
    <experiments>3</experiments>
</comment>
<comment type="interaction">
    <interactant intactId="EBI-11956809">
        <id>Q8TBM7</id>
    </interactant>
    <interactant intactId="EBI-2855401">
        <id>Q9BY50</id>
        <label>SEC11C</label>
    </interactant>
    <organismsDiffer>false</organismsDiffer>
    <experiments>3</experiments>
</comment>
<comment type="interaction">
    <interactant intactId="EBI-11956809">
        <id>Q8TBM7</id>
    </interactant>
    <interactant intactId="EBI-1211440">
        <id>P27105</id>
        <label>STOM</label>
    </interactant>
    <organismsDiffer>false</organismsDiffer>
    <experiments>3</experiments>
</comment>
<comment type="interaction">
    <interactant intactId="EBI-11956809">
        <id>Q8TBM7</id>
    </interactant>
    <interactant intactId="EBI-712466">
        <id>Q16623</id>
        <label>STX1A</label>
    </interactant>
    <organismsDiffer>false</organismsDiffer>
    <experiments>3</experiments>
</comment>
<comment type="interaction">
    <interactant intactId="EBI-11956809">
        <id>Q8TBM7</id>
    </interactant>
    <interactant intactId="EBI-524909">
        <id>P21579</id>
        <label>SYT1</label>
    </interactant>
    <organismsDiffer>false</organismsDiffer>
    <experiments>3</experiments>
</comment>
<comment type="interaction">
    <interactant intactId="EBI-11956809">
        <id>Q8TBM7</id>
    </interactant>
    <interactant intactId="EBI-11603430">
        <id>Q6PL24</id>
        <label>TMED8</label>
    </interactant>
    <organismsDiffer>false</organismsDiffer>
    <experiments>3</experiments>
</comment>
<comment type="interaction">
    <interactant intactId="EBI-11956809">
        <id>Q8TBM7</id>
    </interactant>
    <interactant intactId="EBI-8638294">
        <id>Q9NUH8</id>
        <label>TMEM14B</label>
    </interactant>
    <organismsDiffer>false</organismsDiffer>
    <experiments>3</experiments>
</comment>
<comment type="interaction">
    <interactant intactId="EBI-11956809">
        <id>Q8TBM7</id>
    </interactant>
    <interactant intactId="EBI-10982110">
        <id>Q96Q45-2</id>
        <label>TMEM237</label>
    </interactant>
    <organismsDiffer>false</organismsDiffer>
    <experiments>3</experiments>
</comment>
<comment type="interaction">
    <interactant intactId="EBI-11956809">
        <id>Q8TBM7</id>
    </interactant>
    <interactant intactId="EBI-3923061">
        <id>Q96B21</id>
        <label>TMEM45B</label>
    </interactant>
    <organismsDiffer>false</organismsDiffer>
    <experiments>3</experiments>
</comment>
<comment type="interaction">
    <interactant intactId="EBI-11956809">
        <id>Q8TBM7</id>
    </interactant>
    <interactant intactId="EBI-726044">
        <id>Q9NW97</id>
        <label>TMEM51</label>
    </interactant>
    <organismsDiffer>false</organismsDiffer>
    <experiments>3</experiments>
</comment>
<comment type="interaction">
    <interactant intactId="EBI-11956809">
        <id>Q8TBM7</id>
    </interactant>
    <interactant intactId="EBI-8649725">
        <id>Q9BSE2</id>
        <label>TMEM79</label>
    </interactant>
    <organismsDiffer>false</organismsDiffer>
    <experiments>3</experiments>
</comment>
<comment type="interaction">
    <interactant intactId="EBI-11956809">
        <id>Q8TBM7</id>
    </interactant>
    <interactant intactId="EBI-6447886">
        <id>Q9Y320</id>
        <label>TMX2</label>
    </interactant>
    <organismsDiffer>false</organismsDiffer>
    <experiments>3</experiments>
</comment>
<comment type="subcellular location">
    <subcellularLocation>
        <location evidence="2">Membrane</location>
        <topology evidence="2">Multi-pass membrane protein</topology>
    </subcellularLocation>
</comment>
<comment type="alternative products">
    <event type="alternative splicing"/>
    <isoform>
        <id>Q8TBM7-1</id>
        <name>1</name>
        <sequence type="displayed"/>
    </isoform>
    <isoform>
        <id>Q8TBM7-2</id>
        <name>2</name>
        <sequence type="described" ref="VSP_047062"/>
    </isoform>
    <isoform>
        <id>Q8TBM7-3</id>
        <name>3</name>
        <sequence type="described" ref="VSP_047063"/>
    </isoform>
</comment>
<name>TM254_HUMAN</name>
<keyword id="KW-0007">Acetylation</keyword>
<keyword id="KW-0025">Alternative splicing</keyword>
<keyword id="KW-0472">Membrane</keyword>
<keyword id="KW-1185">Reference proteome</keyword>
<keyword id="KW-0812">Transmembrane</keyword>
<keyword id="KW-1133">Transmembrane helix</keyword>
<gene>
    <name type="primary">TMEM254</name>
    <name type="synonym">C10orf57</name>
</gene>
<organism>
    <name type="scientific">Homo sapiens</name>
    <name type="common">Human</name>
    <dbReference type="NCBI Taxonomy" id="9606"/>
    <lineage>
        <taxon>Eukaryota</taxon>
        <taxon>Metazoa</taxon>
        <taxon>Chordata</taxon>
        <taxon>Craniata</taxon>
        <taxon>Vertebrata</taxon>
        <taxon>Euteleostomi</taxon>
        <taxon>Mammalia</taxon>
        <taxon>Eutheria</taxon>
        <taxon>Euarchontoglires</taxon>
        <taxon>Primates</taxon>
        <taxon>Haplorrhini</taxon>
        <taxon>Catarrhini</taxon>
        <taxon>Hominidae</taxon>
        <taxon>Homo</taxon>
    </lineage>
</organism>
<protein>
    <recommendedName>
        <fullName>Transmembrane protein 254</fullName>
    </recommendedName>
</protein>
<evidence type="ECO:0000255" key="1"/>
<evidence type="ECO:0000305" key="2"/>
<evidence type="ECO:0007744" key="3">
    <source>
    </source>
</evidence>
<reference key="1">
    <citation type="journal article" date="2004" name="Nat. Genet.">
        <title>Complete sequencing and characterization of 21,243 full-length human cDNAs.</title>
        <authorList>
            <person name="Ota T."/>
            <person name="Suzuki Y."/>
            <person name="Nishikawa T."/>
            <person name="Otsuki T."/>
            <person name="Sugiyama T."/>
            <person name="Irie R."/>
            <person name="Wakamatsu A."/>
            <person name="Hayashi K."/>
            <person name="Sato H."/>
            <person name="Nagai K."/>
            <person name="Kimura K."/>
            <person name="Makita H."/>
            <person name="Sekine M."/>
            <person name="Obayashi M."/>
            <person name="Nishi T."/>
            <person name="Shibahara T."/>
            <person name="Tanaka T."/>
            <person name="Ishii S."/>
            <person name="Yamamoto J."/>
            <person name="Saito K."/>
            <person name="Kawai Y."/>
            <person name="Isono Y."/>
            <person name="Nakamura Y."/>
            <person name="Nagahari K."/>
            <person name="Murakami K."/>
            <person name="Yasuda T."/>
            <person name="Iwayanagi T."/>
            <person name="Wagatsuma M."/>
            <person name="Shiratori A."/>
            <person name="Sudo H."/>
            <person name="Hosoiri T."/>
            <person name="Kaku Y."/>
            <person name="Kodaira H."/>
            <person name="Kondo H."/>
            <person name="Sugawara M."/>
            <person name="Takahashi M."/>
            <person name="Kanda K."/>
            <person name="Yokoi T."/>
            <person name="Furuya T."/>
            <person name="Kikkawa E."/>
            <person name="Omura Y."/>
            <person name="Abe K."/>
            <person name="Kamihara K."/>
            <person name="Katsuta N."/>
            <person name="Sato K."/>
            <person name="Tanikawa M."/>
            <person name="Yamazaki M."/>
            <person name="Ninomiya K."/>
            <person name="Ishibashi T."/>
            <person name="Yamashita H."/>
            <person name="Murakawa K."/>
            <person name="Fujimori K."/>
            <person name="Tanai H."/>
            <person name="Kimata M."/>
            <person name="Watanabe M."/>
            <person name="Hiraoka S."/>
            <person name="Chiba Y."/>
            <person name="Ishida S."/>
            <person name="Ono Y."/>
            <person name="Takiguchi S."/>
            <person name="Watanabe S."/>
            <person name="Yosida M."/>
            <person name="Hotuta T."/>
            <person name="Kusano J."/>
            <person name="Kanehori K."/>
            <person name="Takahashi-Fujii A."/>
            <person name="Hara H."/>
            <person name="Tanase T.-O."/>
            <person name="Nomura Y."/>
            <person name="Togiya S."/>
            <person name="Komai F."/>
            <person name="Hara R."/>
            <person name="Takeuchi K."/>
            <person name="Arita M."/>
            <person name="Imose N."/>
            <person name="Musashino K."/>
            <person name="Yuuki H."/>
            <person name="Oshima A."/>
            <person name="Sasaki N."/>
            <person name="Aotsuka S."/>
            <person name="Yoshikawa Y."/>
            <person name="Matsunawa H."/>
            <person name="Ichihara T."/>
            <person name="Shiohata N."/>
            <person name="Sano S."/>
            <person name="Moriya S."/>
            <person name="Momiyama H."/>
            <person name="Satoh N."/>
            <person name="Takami S."/>
            <person name="Terashima Y."/>
            <person name="Suzuki O."/>
            <person name="Nakagawa S."/>
            <person name="Senoh A."/>
            <person name="Mizoguchi H."/>
            <person name="Goto Y."/>
            <person name="Shimizu F."/>
            <person name="Wakebe H."/>
            <person name="Hishigaki H."/>
            <person name="Watanabe T."/>
            <person name="Sugiyama A."/>
            <person name="Takemoto M."/>
            <person name="Kawakami B."/>
            <person name="Yamazaki M."/>
            <person name="Watanabe K."/>
            <person name="Kumagai A."/>
            <person name="Itakura S."/>
            <person name="Fukuzumi Y."/>
            <person name="Fujimori Y."/>
            <person name="Komiyama M."/>
            <person name="Tashiro H."/>
            <person name="Tanigami A."/>
            <person name="Fujiwara T."/>
            <person name="Ono T."/>
            <person name="Yamada K."/>
            <person name="Fujii Y."/>
            <person name="Ozaki K."/>
            <person name="Hirao M."/>
            <person name="Ohmori Y."/>
            <person name="Kawabata A."/>
            <person name="Hikiji T."/>
            <person name="Kobatake N."/>
            <person name="Inagaki H."/>
            <person name="Ikema Y."/>
            <person name="Okamoto S."/>
            <person name="Okitani R."/>
            <person name="Kawakami T."/>
            <person name="Noguchi S."/>
            <person name="Itoh T."/>
            <person name="Shigeta K."/>
            <person name="Senba T."/>
            <person name="Matsumura K."/>
            <person name="Nakajima Y."/>
            <person name="Mizuno T."/>
            <person name="Morinaga M."/>
            <person name="Sasaki M."/>
            <person name="Togashi T."/>
            <person name="Oyama M."/>
            <person name="Hata H."/>
            <person name="Watanabe M."/>
            <person name="Komatsu T."/>
            <person name="Mizushima-Sugano J."/>
            <person name="Satoh T."/>
            <person name="Shirai Y."/>
            <person name="Takahashi Y."/>
            <person name="Nakagawa K."/>
            <person name="Okumura K."/>
            <person name="Nagase T."/>
            <person name="Nomura N."/>
            <person name="Kikuchi H."/>
            <person name="Masuho Y."/>
            <person name="Yamashita R."/>
            <person name="Nakai K."/>
            <person name="Yada T."/>
            <person name="Nakamura Y."/>
            <person name="Ohara O."/>
            <person name="Isogai T."/>
            <person name="Sugano S."/>
        </authorList>
    </citation>
    <scope>NUCLEOTIDE SEQUENCE [LARGE SCALE MRNA]</scope>
    <source>
        <tissue>Ovary</tissue>
    </source>
</reference>
<reference key="2">
    <citation type="submission" date="2004-06" db="EMBL/GenBank/DDBJ databases">
        <title>Cloning of human full open reading frames in Gateway(TM) system entry vector (pDONR201).</title>
        <authorList>
            <person name="Ebert L."/>
            <person name="Schick M."/>
            <person name="Neubert P."/>
            <person name="Schatten R."/>
            <person name="Henze S."/>
            <person name="Korn B."/>
        </authorList>
    </citation>
    <scope>NUCLEOTIDE SEQUENCE [LARGE SCALE MRNA]</scope>
</reference>
<reference key="3">
    <citation type="submission" date="2005-04" db="EMBL/GenBank/DDBJ databases">
        <authorList>
            <person name="Suzuki Y."/>
            <person name="Sugano S."/>
            <person name="Totoki Y."/>
            <person name="Toyoda A."/>
            <person name="Takeda T."/>
            <person name="Sakaki Y."/>
            <person name="Tanaka A."/>
            <person name="Yokoyama S."/>
        </authorList>
    </citation>
    <scope>NUCLEOTIDE SEQUENCE [LARGE SCALE MRNA]</scope>
    <source>
        <tissue>Adipose tissue</tissue>
    </source>
</reference>
<reference key="4">
    <citation type="journal article" date="2004" name="Nature">
        <title>The DNA sequence and comparative analysis of human chromosome 10.</title>
        <authorList>
            <person name="Deloukas P."/>
            <person name="Earthrowl M.E."/>
            <person name="Grafham D.V."/>
            <person name="Rubenfield M."/>
            <person name="French L."/>
            <person name="Steward C.A."/>
            <person name="Sims S.K."/>
            <person name="Jones M.C."/>
            <person name="Searle S."/>
            <person name="Scott C."/>
            <person name="Howe K."/>
            <person name="Hunt S.E."/>
            <person name="Andrews T.D."/>
            <person name="Gilbert J.G.R."/>
            <person name="Swarbreck D."/>
            <person name="Ashurst J.L."/>
            <person name="Taylor A."/>
            <person name="Battles J."/>
            <person name="Bird C.P."/>
            <person name="Ainscough R."/>
            <person name="Almeida J.P."/>
            <person name="Ashwell R.I.S."/>
            <person name="Ambrose K.D."/>
            <person name="Babbage A.K."/>
            <person name="Bagguley C.L."/>
            <person name="Bailey J."/>
            <person name="Banerjee R."/>
            <person name="Bates K."/>
            <person name="Beasley H."/>
            <person name="Bray-Allen S."/>
            <person name="Brown A.J."/>
            <person name="Brown J.Y."/>
            <person name="Burford D.C."/>
            <person name="Burrill W."/>
            <person name="Burton J."/>
            <person name="Cahill P."/>
            <person name="Camire D."/>
            <person name="Carter N.P."/>
            <person name="Chapman J.C."/>
            <person name="Clark S.Y."/>
            <person name="Clarke G."/>
            <person name="Clee C.M."/>
            <person name="Clegg S."/>
            <person name="Corby N."/>
            <person name="Coulson A."/>
            <person name="Dhami P."/>
            <person name="Dutta I."/>
            <person name="Dunn M."/>
            <person name="Faulkner L."/>
            <person name="Frankish A."/>
            <person name="Frankland J.A."/>
            <person name="Garner P."/>
            <person name="Garnett J."/>
            <person name="Gribble S."/>
            <person name="Griffiths C."/>
            <person name="Grocock R."/>
            <person name="Gustafson E."/>
            <person name="Hammond S."/>
            <person name="Harley J.L."/>
            <person name="Hart E."/>
            <person name="Heath P.D."/>
            <person name="Ho T.P."/>
            <person name="Hopkins B."/>
            <person name="Horne J."/>
            <person name="Howden P.J."/>
            <person name="Huckle E."/>
            <person name="Hynds C."/>
            <person name="Johnson C."/>
            <person name="Johnson D."/>
            <person name="Kana A."/>
            <person name="Kay M."/>
            <person name="Kimberley A.M."/>
            <person name="Kershaw J.K."/>
            <person name="Kokkinaki M."/>
            <person name="Laird G.K."/>
            <person name="Lawlor S."/>
            <person name="Lee H.M."/>
            <person name="Leongamornlert D.A."/>
            <person name="Laird G."/>
            <person name="Lloyd C."/>
            <person name="Lloyd D.M."/>
            <person name="Loveland J."/>
            <person name="Lovell J."/>
            <person name="McLaren S."/>
            <person name="McLay K.E."/>
            <person name="McMurray A."/>
            <person name="Mashreghi-Mohammadi M."/>
            <person name="Matthews L."/>
            <person name="Milne S."/>
            <person name="Nickerson T."/>
            <person name="Nguyen M."/>
            <person name="Overton-Larty E."/>
            <person name="Palmer S.A."/>
            <person name="Pearce A.V."/>
            <person name="Peck A.I."/>
            <person name="Pelan S."/>
            <person name="Phillimore B."/>
            <person name="Porter K."/>
            <person name="Rice C.M."/>
            <person name="Rogosin A."/>
            <person name="Ross M.T."/>
            <person name="Sarafidou T."/>
            <person name="Sehra H.K."/>
            <person name="Shownkeen R."/>
            <person name="Skuce C.D."/>
            <person name="Smith M."/>
            <person name="Standring L."/>
            <person name="Sycamore N."/>
            <person name="Tester J."/>
            <person name="Thorpe A."/>
            <person name="Torcasso W."/>
            <person name="Tracey A."/>
            <person name="Tromans A."/>
            <person name="Tsolas J."/>
            <person name="Wall M."/>
            <person name="Walsh J."/>
            <person name="Wang H."/>
            <person name="Weinstock K."/>
            <person name="West A.P."/>
            <person name="Willey D.L."/>
            <person name="Whitehead S.L."/>
            <person name="Wilming L."/>
            <person name="Wray P.W."/>
            <person name="Young L."/>
            <person name="Chen Y."/>
            <person name="Lovering R.C."/>
            <person name="Moschonas N.K."/>
            <person name="Siebert R."/>
            <person name="Fechtel K."/>
            <person name="Bentley D."/>
            <person name="Durbin R.M."/>
            <person name="Hubbard T."/>
            <person name="Doucette-Stamm L."/>
            <person name="Beck S."/>
            <person name="Smith D.R."/>
            <person name="Rogers J."/>
        </authorList>
    </citation>
    <scope>NUCLEOTIDE SEQUENCE [LARGE SCALE GENOMIC DNA]</scope>
</reference>
<reference key="5">
    <citation type="submission" date="2005-09" db="EMBL/GenBank/DDBJ databases">
        <authorList>
            <person name="Mural R.J."/>
            <person name="Istrail S."/>
            <person name="Sutton G.G."/>
            <person name="Florea L."/>
            <person name="Halpern A.L."/>
            <person name="Mobarry C.M."/>
            <person name="Lippert R."/>
            <person name="Walenz B."/>
            <person name="Shatkay H."/>
            <person name="Dew I."/>
            <person name="Miller J.R."/>
            <person name="Flanigan M.J."/>
            <person name="Edwards N.J."/>
            <person name="Bolanos R."/>
            <person name="Fasulo D."/>
            <person name="Halldorsson B.V."/>
            <person name="Hannenhalli S."/>
            <person name="Turner R."/>
            <person name="Yooseph S."/>
            <person name="Lu F."/>
            <person name="Nusskern D.R."/>
            <person name="Shue B.C."/>
            <person name="Zheng X.H."/>
            <person name="Zhong F."/>
            <person name="Delcher A.L."/>
            <person name="Huson D.H."/>
            <person name="Kravitz S.A."/>
            <person name="Mouchard L."/>
            <person name="Reinert K."/>
            <person name="Remington K.A."/>
            <person name="Clark A.G."/>
            <person name="Waterman M.S."/>
            <person name="Eichler E.E."/>
            <person name="Adams M.D."/>
            <person name="Hunkapiller M.W."/>
            <person name="Myers E.W."/>
            <person name="Venter J.C."/>
        </authorList>
    </citation>
    <scope>NUCLEOTIDE SEQUENCE [LARGE SCALE GENOMIC DNA]</scope>
</reference>
<reference key="6">
    <citation type="journal article" date="2004" name="Genome Res.">
        <title>The status, quality, and expansion of the NIH full-length cDNA project: the Mammalian Gene Collection (MGC).</title>
        <authorList>
            <consortium name="The MGC Project Team"/>
        </authorList>
    </citation>
    <scope>NUCLEOTIDE SEQUENCE [LARGE SCALE MRNA]</scope>
    <source>
        <tissue>Prostate</tissue>
    </source>
</reference>
<reference key="7">
    <citation type="journal article" date="2012" name="Proc. Natl. Acad. Sci. U.S.A.">
        <title>N-terminal acetylome analyses and functional insights of the N-terminal acetyltransferase NatB.</title>
        <authorList>
            <person name="Van Damme P."/>
            <person name="Lasa M."/>
            <person name="Polevoda B."/>
            <person name="Gazquez C."/>
            <person name="Elosegui-Artola A."/>
            <person name="Kim D.S."/>
            <person name="De Juan-Pardo E."/>
            <person name="Demeyer K."/>
            <person name="Hole K."/>
            <person name="Larrea E."/>
            <person name="Timmerman E."/>
            <person name="Prieto J."/>
            <person name="Arnesen T."/>
            <person name="Sherman F."/>
            <person name="Gevaert K."/>
            <person name="Aldabe R."/>
        </authorList>
    </citation>
    <scope>ACETYLATION [LARGE SCALE ANALYSIS] AT ALA-2</scope>
    <scope>CLEAVAGE OF INITIATOR METHIONINE [LARGE SCALE ANALYSIS]</scope>
    <scope>IDENTIFICATION BY MASS SPECTROMETRY [LARGE SCALE ANALYSIS]</scope>
</reference>
<sequence>MATAAGATYFQRGSLFWFTVITLSFGYYTWVVFWPQSIPYQNLGPLGPFTQYLVDHHHTLLCNGYWLAWLIHVGESLYAIVLCKHKGITSGRAQLLWFLQTFFFGIASLTILIAYKRKRQKQT</sequence>